<protein>
    <recommendedName>
        <fullName evidence="1">Small ribosomal subunit protein uS17</fullName>
    </recommendedName>
    <alternativeName>
        <fullName evidence="2">30S ribosomal protein S17</fullName>
    </alternativeName>
</protein>
<name>RS17_STRPF</name>
<organism>
    <name type="scientific">Streptococcus pyogenes serotype M4 (strain MGAS10750)</name>
    <dbReference type="NCBI Taxonomy" id="370554"/>
    <lineage>
        <taxon>Bacteria</taxon>
        <taxon>Bacillati</taxon>
        <taxon>Bacillota</taxon>
        <taxon>Bacilli</taxon>
        <taxon>Lactobacillales</taxon>
        <taxon>Streptococcaceae</taxon>
        <taxon>Streptococcus</taxon>
    </lineage>
</organism>
<comment type="function">
    <text evidence="1">One of the primary rRNA binding proteins, it binds specifically to the 5'-end of 16S ribosomal RNA.</text>
</comment>
<comment type="subunit">
    <text evidence="1">Part of the 30S ribosomal subunit.</text>
</comment>
<comment type="similarity">
    <text evidence="1">Belongs to the universal ribosomal protein uS17 family.</text>
</comment>
<sequence>MERNQRKTLYGRVVSDKMDKTITVVVETKRNHPVYGKRINYSKKYKAHDENNVAKEGDIVRIMETRPLSATKRFRLVEVVEKAVII</sequence>
<keyword id="KW-0687">Ribonucleoprotein</keyword>
<keyword id="KW-0689">Ribosomal protein</keyword>
<keyword id="KW-0694">RNA-binding</keyword>
<keyword id="KW-0699">rRNA-binding</keyword>
<feature type="chain" id="PRO_0000255707" description="Small ribosomal subunit protein uS17">
    <location>
        <begin position="1"/>
        <end position="86"/>
    </location>
</feature>
<evidence type="ECO:0000255" key="1">
    <source>
        <dbReference type="HAMAP-Rule" id="MF_01345"/>
    </source>
</evidence>
<evidence type="ECO:0000305" key="2"/>
<dbReference type="EMBL" id="CP000262">
    <property type="protein sequence ID" value="ABF37006.1"/>
    <property type="molecule type" value="Genomic_DNA"/>
</dbReference>
<dbReference type="SMR" id="Q1J905"/>
<dbReference type="KEGG" id="spi:MGAS10750_Spy0056"/>
<dbReference type="HOGENOM" id="CLU_073626_1_0_9"/>
<dbReference type="Proteomes" id="UP000002434">
    <property type="component" value="Chromosome"/>
</dbReference>
<dbReference type="GO" id="GO:0022627">
    <property type="term" value="C:cytosolic small ribosomal subunit"/>
    <property type="evidence" value="ECO:0007669"/>
    <property type="project" value="TreeGrafter"/>
</dbReference>
<dbReference type="GO" id="GO:0019843">
    <property type="term" value="F:rRNA binding"/>
    <property type="evidence" value="ECO:0007669"/>
    <property type="project" value="UniProtKB-UniRule"/>
</dbReference>
<dbReference type="GO" id="GO:0003735">
    <property type="term" value="F:structural constituent of ribosome"/>
    <property type="evidence" value="ECO:0007669"/>
    <property type="project" value="InterPro"/>
</dbReference>
<dbReference type="GO" id="GO:0006412">
    <property type="term" value="P:translation"/>
    <property type="evidence" value="ECO:0007669"/>
    <property type="project" value="UniProtKB-UniRule"/>
</dbReference>
<dbReference type="CDD" id="cd00364">
    <property type="entry name" value="Ribosomal_uS17"/>
    <property type="match status" value="1"/>
</dbReference>
<dbReference type="FunFam" id="2.40.50.140:FF:000026">
    <property type="entry name" value="30S ribosomal protein S17"/>
    <property type="match status" value="1"/>
</dbReference>
<dbReference type="Gene3D" id="2.40.50.140">
    <property type="entry name" value="Nucleic acid-binding proteins"/>
    <property type="match status" value="1"/>
</dbReference>
<dbReference type="HAMAP" id="MF_01345_B">
    <property type="entry name" value="Ribosomal_uS17_B"/>
    <property type="match status" value="1"/>
</dbReference>
<dbReference type="InterPro" id="IPR012340">
    <property type="entry name" value="NA-bd_OB-fold"/>
</dbReference>
<dbReference type="InterPro" id="IPR000266">
    <property type="entry name" value="Ribosomal_uS17"/>
</dbReference>
<dbReference type="InterPro" id="IPR019984">
    <property type="entry name" value="Ribosomal_uS17_bact/chlr"/>
</dbReference>
<dbReference type="InterPro" id="IPR019979">
    <property type="entry name" value="Ribosomal_uS17_CS"/>
</dbReference>
<dbReference type="NCBIfam" id="NF004123">
    <property type="entry name" value="PRK05610.1"/>
    <property type="match status" value="1"/>
</dbReference>
<dbReference type="NCBIfam" id="TIGR03635">
    <property type="entry name" value="uS17_bact"/>
    <property type="match status" value="1"/>
</dbReference>
<dbReference type="PANTHER" id="PTHR10744">
    <property type="entry name" value="40S RIBOSOMAL PROTEIN S11 FAMILY MEMBER"/>
    <property type="match status" value="1"/>
</dbReference>
<dbReference type="PANTHER" id="PTHR10744:SF1">
    <property type="entry name" value="SMALL RIBOSOMAL SUBUNIT PROTEIN US17M"/>
    <property type="match status" value="1"/>
</dbReference>
<dbReference type="Pfam" id="PF00366">
    <property type="entry name" value="Ribosomal_S17"/>
    <property type="match status" value="1"/>
</dbReference>
<dbReference type="PRINTS" id="PR00973">
    <property type="entry name" value="RIBOSOMALS17"/>
</dbReference>
<dbReference type="SUPFAM" id="SSF50249">
    <property type="entry name" value="Nucleic acid-binding proteins"/>
    <property type="match status" value="1"/>
</dbReference>
<dbReference type="PROSITE" id="PS00056">
    <property type="entry name" value="RIBOSOMAL_S17"/>
    <property type="match status" value="1"/>
</dbReference>
<accession>Q1J905</accession>
<gene>
    <name evidence="1" type="primary">rpsQ</name>
    <name type="ordered locus">MGAS10750_Spy0056</name>
</gene>
<reference key="1">
    <citation type="journal article" date="2006" name="Proc. Natl. Acad. Sci. U.S.A.">
        <title>Molecular genetic anatomy of inter- and intraserotype variation in the human bacterial pathogen group A Streptococcus.</title>
        <authorList>
            <person name="Beres S.B."/>
            <person name="Richter E.W."/>
            <person name="Nagiec M.J."/>
            <person name="Sumby P."/>
            <person name="Porcella S.F."/>
            <person name="DeLeo F.R."/>
            <person name="Musser J.M."/>
        </authorList>
    </citation>
    <scope>NUCLEOTIDE SEQUENCE [LARGE SCALE GENOMIC DNA]</scope>
    <source>
        <strain>MGAS10750</strain>
    </source>
</reference>
<proteinExistence type="inferred from homology"/>